<feature type="chain" id="PRO_0000100342" description="Cold shock protein CspV">
    <location>
        <begin position="1"/>
        <end position="70"/>
    </location>
</feature>
<feature type="domain" description="CSD">
    <location>
        <begin position="7"/>
        <end position="67"/>
    </location>
</feature>
<dbReference type="EMBL" id="AF409091">
    <property type="protein sequence ID" value="AAK97640.1"/>
    <property type="molecule type" value="Genomic_DNA"/>
</dbReference>
<dbReference type="EMBL" id="AE003853">
    <property type="protein sequence ID" value="AAF96830.1"/>
    <property type="molecule type" value="Genomic_DNA"/>
</dbReference>
<dbReference type="PIR" id="E82399">
    <property type="entry name" value="E82399"/>
</dbReference>
<dbReference type="RefSeq" id="NP_233318.1">
    <property type="nucleotide sequence ID" value="NC_002506.1"/>
</dbReference>
<dbReference type="RefSeq" id="WP_000105005.1">
    <property type="nucleotide sequence ID" value="NZ_LT906615.1"/>
</dbReference>
<dbReference type="SMR" id="Q9KL16"/>
<dbReference type="STRING" id="243277.VC_A0933"/>
<dbReference type="DNASU" id="2612854"/>
<dbReference type="EnsemblBacteria" id="AAF96830">
    <property type="protein sequence ID" value="AAF96830"/>
    <property type="gene ID" value="VC_A0933"/>
</dbReference>
<dbReference type="KEGG" id="vch:VC_A0933"/>
<dbReference type="PATRIC" id="fig|243277.26.peg.3545"/>
<dbReference type="eggNOG" id="COG1278">
    <property type="taxonomic scope" value="Bacteria"/>
</dbReference>
<dbReference type="HOGENOM" id="CLU_117621_0_3_6"/>
<dbReference type="PHI-base" id="PHI:6372"/>
<dbReference type="Proteomes" id="UP000000584">
    <property type="component" value="Chromosome 2"/>
</dbReference>
<dbReference type="GO" id="GO:0005829">
    <property type="term" value="C:cytosol"/>
    <property type="evidence" value="ECO:0007669"/>
    <property type="project" value="UniProtKB-ARBA"/>
</dbReference>
<dbReference type="GO" id="GO:0003677">
    <property type="term" value="F:DNA binding"/>
    <property type="evidence" value="ECO:0007669"/>
    <property type="project" value="UniProtKB-KW"/>
</dbReference>
<dbReference type="GO" id="GO:0003676">
    <property type="term" value="F:nucleic acid binding"/>
    <property type="evidence" value="ECO:0000318"/>
    <property type="project" value="GO_Central"/>
</dbReference>
<dbReference type="GO" id="GO:0010468">
    <property type="term" value="P:regulation of gene expression"/>
    <property type="evidence" value="ECO:0000318"/>
    <property type="project" value="GO_Central"/>
</dbReference>
<dbReference type="CDD" id="cd04458">
    <property type="entry name" value="CSP_CDS"/>
    <property type="match status" value="1"/>
</dbReference>
<dbReference type="FunFam" id="2.40.50.140:FF:000006">
    <property type="entry name" value="Cold shock protein CspC"/>
    <property type="match status" value="1"/>
</dbReference>
<dbReference type="Gene3D" id="6.20.370.130">
    <property type="match status" value="1"/>
</dbReference>
<dbReference type="Gene3D" id="2.40.50.140">
    <property type="entry name" value="Nucleic acid-binding proteins"/>
    <property type="match status" value="1"/>
</dbReference>
<dbReference type="InterPro" id="IPR012156">
    <property type="entry name" value="Cold_shock_CspA"/>
</dbReference>
<dbReference type="InterPro" id="IPR050181">
    <property type="entry name" value="Cold_shock_domain"/>
</dbReference>
<dbReference type="InterPro" id="IPR011129">
    <property type="entry name" value="CSD"/>
</dbReference>
<dbReference type="InterPro" id="IPR002059">
    <property type="entry name" value="CSP_DNA-bd"/>
</dbReference>
<dbReference type="InterPro" id="IPR012340">
    <property type="entry name" value="NA-bd_OB-fold"/>
</dbReference>
<dbReference type="PANTHER" id="PTHR11544">
    <property type="entry name" value="COLD SHOCK DOMAIN CONTAINING PROTEINS"/>
    <property type="match status" value="1"/>
</dbReference>
<dbReference type="Pfam" id="PF00313">
    <property type="entry name" value="CSD"/>
    <property type="match status" value="1"/>
</dbReference>
<dbReference type="PIRSF" id="PIRSF002599">
    <property type="entry name" value="Cold_shock_A"/>
    <property type="match status" value="1"/>
</dbReference>
<dbReference type="PRINTS" id="PR00050">
    <property type="entry name" value="COLDSHOCK"/>
</dbReference>
<dbReference type="SMART" id="SM00357">
    <property type="entry name" value="CSP"/>
    <property type="match status" value="1"/>
</dbReference>
<dbReference type="SUPFAM" id="SSF50249">
    <property type="entry name" value="Nucleic acid-binding proteins"/>
    <property type="match status" value="1"/>
</dbReference>
<dbReference type="PROSITE" id="PS51857">
    <property type="entry name" value="CSD_2"/>
    <property type="match status" value="1"/>
</dbReference>
<gene>
    <name type="primary">cspV</name>
    <name type="ordered locus">VC_A0933</name>
</gene>
<sequence length="70" mass="7629">MSTKMTGSVKWFNETKGFGFLTQDNGGNDVFVHFNSIQSEGFKTLAEGQRVSFIVEQGKKGPQASNVVAL</sequence>
<evidence type="ECO:0000250" key="1"/>
<reference key="1">
    <citation type="submission" date="2001-08" db="EMBL/GenBank/DDBJ databases">
        <title>CspV, a major cold-shock-inducible protein of Vibrio cholerae.</title>
        <authorList>
            <person name="Datta P.P."/>
            <person name="Bhadra R.K."/>
        </authorList>
    </citation>
    <scope>NUCLEOTIDE SEQUENCE [GENOMIC DNA]</scope>
    <source>
        <strain>SG24</strain>
    </source>
</reference>
<reference key="2">
    <citation type="journal article" date="2000" name="Nature">
        <title>DNA sequence of both chromosomes of the cholera pathogen Vibrio cholerae.</title>
        <authorList>
            <person name="Heidelberg J.F."/>
            <person name="Eisen J.A."/>
            <person name="Nelson W.C."/>
            <person name="Clayton R.A."/>
            <person name="Gwinn M.L."/>
            <person name="Dodson R.J."/>
            <person name="Haft D.H."/>
            <person name="Hickey E.K."/>
            <person name="Peterson J.D."/>
            <person name="Umayam L.A."/>
            <person name="Gill S.R."/>
            <person name="Nelson K.E."/>
            <person name="Read T.D."/>
            <person name="Tettelin H."/>
            <person name="Richardson D.L."/>
            <person name="Ermolaeva M.D."/>
            <person name="Vamathevan J.J."/>
            <person name="Bass S."/>
            <person name="Qin H."/>
            <person name="Dragoi I."/>
            <person name="Sellers P."/>
            <person name="McDonald L.A."/>
            <person name="Utterback T.R."/>
            <person name="Fleischmann R.D."/>
            <person name="Nierman W.C."/>
            <person name="White O."/>
            <person name="Salzberg S.L."/>
            <person name="Smith H.O."/>
            <person name="Colwell R.R."/>
            <person name="Mekalanos J.J."/>
            <person name="Venter J.C."/>
            <person name="Fraser C.M."/>
        </authorList>
    </citation>
    <scope>NUCLEOTIDE SEQUENCE [LARGE SCALE GENOMIC DNA]</scope>
    <source>
        <strain>ATCC 39315 / El Tor Inaba N16961</strain>
    </source>
</reference>
<accession>Q9KL16</accession>
<proteinExistence type="evidence at transcript level"/>
<protein>
    <recommendedName>
        <fullName>Cold shock protein CspV</fullName>
    </recommendedName>
</protein>
<organism>
    <name type="scientific">Vibrio cholerae serotype O1 (strain ATCC 39315 / El Tor Inaba N16961)</name>
    <dbReference type="NCBI Taxonomy" id="243277"/>
    <lineage>
        <taxon>Bacteria</taxon>
        <taxon>Pseudomonadati</taxon>
        <taxon>Pseudomonadota</taxon>
        <taxon>Gammaproteobacteria</taxon>
        <taxon>Vibrionales</taxon>
        <taxon>Vibrionaceae</taxon>
        <taxon>Vibrio</taxon>
    </lineage>
</organism>
<comment type="subcellular location">
    <subcellularLocation>
        <location evidence="1">Cytoplasm</location>
    </subcellularLocation>
</comment>
<comment type="induction">
    <text>In response to low temperature.</text>
</comment>
<name>CSPV_VIBCH</name>
<keyword id="KW-0010">Activator</keyword>
<keyword id="KW-0963">Cytoplasm</keyword>
<keyword id="KW-0238">DNA-binding</keyword>
<keyword id="KW-1185">Reference proteome</keyword>
<keyword id="KW-0346">Stress response</keyword>
<keyword id="KW-0804">Transcription</keyword>
<keyword id="KW-0805">Transcription regulation</keyword>